<accession>B0U0E9</accession>
<comment type="function">
    <text evidence="1">Could be a nuclease involved in processing of the 5'-end of pre-16S rRNA.</text>
</comment>
<comment type="subcellular location">
    <subcellularLocation>
        <location evidence="1">Cytoplasm</location>
    </subcellularLocation>
</comment>
<comment type="similarity">
    <text evidence="1">Belongs to the YqgF nuclease family.</text>
</comment>
<name>YQGF_FRAP2</name>
<dbReference type="EC" id="3.1.-.-" evidence="1"/>
<dbReference type="EMBL" id="CP000937">
    <property type="protein sequence ID" value="ABZ87979.1"/>
    <property type="molecule type" value="Genomic_DNA"/>
</dbReference>
<dbReference type="SMR" id="B0U0E9"/>
<dbReference type="KEGG" id="fph:Fphi_1753"/>
<dbReference type="eggNOG" id="COG0816">
    <property type="taxonomic scope" value="Bacteria"/>
</dbReference>
<dbReference type="HOGENOM" id="CLU_098240_3_0_6"/>
<dbReference type="GO" id="GO:0005829">
    <property type="term" value="C:cytosol"/>
    <property type="evidence" value="ECO:0007669"/>
    <property type="project" value="TreeGrafter"/>
</dbReference>
<dbReference type="GO" id="GO:0004518">
    <property type="term" value="F:nuclease activity"/>
    <property type="evidence" value="ECO:0007669"/>
    <property type="project" value="UniProtKB-KW"/>
</dbReference>
<dbReference type="GO" id="GO:0000967">
    <property type="term" value="P:rRNA 5'-end processing"/>
    <property type="evidence" value="ECO:0007669"/>
    <property type="project" value="UniProtKB-UniRule"/>
</dbReference>
<dbReference type="CDD" id="cd16964">
    <property type="entry name" value="YqgF"/>
    <property type="match status" value="1"/>
</dbReference>
<dbReference type="Gene3D" id="3.30.420.140">
    <property type="entry name" value="YqgF/RNase H-like domain"/>
    <property type="match status" value="1"/>
</dbReference>
<dbReference type="HAMAP" id="MF_00651">
    <property type="entry name" value="Nuclease_YqgF"/>
    <property type="match status" value="1"/>
</dbReference>
<dbReference type="InterPro" id="IPR012337">
    <property type="entry name" value="RNaseH-like_sf"/>
</dbReference>
<dbReference type="InterPro" id="IPR005227">
    <property type="entry name" value="YqgF"/>
</dbReference>
<dbReference type="InterPro" id="IPR006641">
    <property type="entry name" value="YqgF/RNaseH-like_dom"/>
</dbReference>
<dbReference type="InterPro" id="IPR037027">
    <property type="entry name" value="YqgF/RNaseH-like_dom_sf"/>
</dbReference>
<dbReference type="NCBIfam" id="TIGR00250">
    <property type="entry name" value="RNAse_H_YqgF"/>
    <property type="match status" value="1"/>
</dbReference>
<dbReference type="PANTHER" id="PTHR33317">
    <property type="entry name" value="POLYNUCLEOTIDYL TRANSFERASE, RIBONUCLEASE H-LIKE SUPERFAMILY PROTEIN"/>
    <property type="match status" value="1"/>
</dbReference>
<dbReference type="PANTHER" id="PTHR33317:SF4">
    <property type="entry name" value="POLYNUCLEOTIDYL TRANSFERASE, RIBONUCLEASE H-LIKE SUPERFAMILY PROTEIN"/>
    <property type="match status" value="1"/>
</dbReference>
<dbReference type="Pfam" id="PF03652">
    <property type="entry name" value="RuvX"/>
    <property type="match status" value="1"/>
</dbReference>
<dbReference type="SMART" id="SM00732">
    <property type="entry name" value="YqgFc"/>
    <property type="match status" value="1"/>
</dbReference>
<dbReference type="SUPFAM" id="SSF53098">
    <property type="entry name" value="Ribonuclease H-like"/>
    <property type="match status" value="1"/>
</dbReference>
<proteinExistence type="inferred from homology"/>
<sequence>MFQSLIAIDYGKARIGLASGQMITKTATPIGTVEAYDGVPNWIELDKIVKRWNPSDIVIGLPLDTQDFETDITKAAKDFAKEVKERYKRNVHLINEAYSTREARWRLEEVKSKKVSHIKVDALAACVILETWMAEN</sequence>
<gene>
    <name type="ordered locus">Fphi_1753</name>
</gene>
<feature type="chain" id="PRO_1000082745" description="Putative pre-16S rRNA nuclease">
    <location>
        <begin position="1"/>
        <end position="136"/>
    </location>
</feature>
<reference key="1">
    <citation type="submission" date="2007-12" db="EMBL/GenBank/DDBJ databases">
        <title>Complete sequence of chromosome of Francisella philomiragia subsp. philomiragia ATCC 25017.</title>
        <authorList>
            <consortium name="US DOE Joint Genome Institute"/>
            <person name="Copeland A."/>
            <person name="Lucas S."/>
            <person name="Lapidus A."/>
            <person name="Barry K."/>
            <person name="Detter J.C."/>
            <person name="Glavina del Rio T."/>
            <person name="Hammon N."/>
            <person name="Israni S."/>
            <person name="Dalin E."/>
            <person name="Tice H."/>
            <person name="Pitluck S."/>
            <person name="Chain P."/>
            <person name="Malfatti S."/>
            <person name="Shin M."/>
            <person name="Vergez L."/>
            <person name="Schmutz J."/>
            <person name="Larimer F."/>
            <person name="Land M."/>
            <person name="Hauser L."/>
            <person name="Richardson P."/>
        </authorList>
    </citation>
    <scope>NUCLEOTIDE SEQUENCE [LARGE SCALE GENOMIC DNA]</scope>
    <source>
        <strain>ATCC 25017 / CCUG 19701 / FSC 153 / O#319-036</strain>
    </source>
</reference>
<organism>
    <name type="scientific">Francisella philomiragia subsp. philomiragia (strain ATCC 25017 / CCUG 19701 / FSC 153 / O#319-036)</name>
    <dbReference type="NCBI Taxonomy" id="484022"/>
    <lineage>
        <taxon>Bacteria</taxon>
        <taxon>Pseudomonadati</taxon>
        <taxon>Pseudomonadota</taxon>
        <taxon>Gammaproteobacteria</taxon>
        <taxon>Thiotrichales</taxon>
        <taxon>Francisellaceae</taxon>
        <taxon>Francisella</taxon>
    </lineage>
</organism>
<evidence type="ECO:0000255" key="1">
    <source>
        <dbReference type="HAMAP-Rule" id="MF_00651"/>
    </source>
</evidence>
<keyword id="KW-0963">Cytoplasm</keyword>
<keyword id="KW-0378">Hydrolase</keyword>
<keyword id="KW-0540">Nuclease</keyword>
<keyword id="KW-0690">Ribosome biogenesis</keyword>
<protein>
    <recommendedName>
        <fullName evidence="1">Putative pre-16S rRNA nuclease</fullName>
        <ecNumber evidence="1">3.1.-.-</ecNumber>
    </recommendedName>
</protein>